<dbReference type="EC" id="5.4.2.11" evidence="1"/>
<dbReference type="EMBL" id="CP000948">
    <property type="protein sequence ID" value="ACB01957.1"/>
    <property type="molecule type" value="Genomic_DNA"/>
</dbReference>
<dbReference type="RefSeq" id="WP_001295305.1">
    <property type="nucleotide sequence ID" value="NC_010473.1"/>
</dbReference>
<dbReference type="SMR" id="B1X786"/>
<dbReference type="GeneID" id="93776726"/>
<dbReference type="KEGG" id="ecd:ECDH10B_0822"/>
<dbReference type="HOGENOM" id="CLU_033323_1_1_6"/>
<dbReference type="UniPathway" id="UPA00109">
    <property type="reaction ID" value="UER00186"/>
</dbReference>
<dbReference type="GO" id="GO:0004619">
    <property type="term" value="F:phosphoglycerate mutase activity"/>
    <property type="evidence" value="ECO:0007669"/>
    <property type="project" value="UniProtKB-EC"/>
</dbReference>
<dbReference type="GO" id="GO:0006094">
    <property type="term" value="P:gluconeogenesis"/>
    <property type="evidence" value="ECO:0007669"/>
    <property type="project" value="UniProtKB-UniRule"/>
</dbReference>
<dbReference type="GO" id="GO:0006096">
    <property type="term" value="P:glycolytic process"/>
    <property type="evidence" value="ECO:0007669"/>
    <property type="project" value="UniProtKB-UniRule"/>
</dbReference>
<dbReference type="CDD" id="cd07067">
    <property type="entry name" value="HP_PGM_like"/>
    <property type="match status" value="1"/>
</dbReference>
<dbReference type="FunFam" id="3.40.50.1240:FF:000003">
    <property type="entry name" value="2,3-bisphosphoglycerate-dependent phosphoglycerate mutase"/>
    <property type="match status" value="1"/>
</dbReference>
<dbReference type="Gene3D" id="3.40.50.1240">
    <property type="entry name" value="Phosphoglycerate mutase-like"/>
    <property type="match status" value="1"/>
</dbReference>
<dbReference type="HAMAP" id="MF_01039">
    <property type="entry name" value="PGAM_GpmA"/>
    <property type="match status" value="1"/>
</dbReference>
<dbReference type="InterPro" id="IPR013078">
    <property type="entry name" value="His_Pase_superF_clade-1"/>
</dbReference>
<dbReference type="InterPro" id="IPR029033">
    <property type="entry name" value="His_PPase_superfam"/>
</dbReference>
<dbReference type="InterPro" id="IPR001345">
    <property type="entry name" value="PG/BPGM_mutase_AS"/>
</dbReference>
<dbReference type="InterPro" id="IPR005952">
    <property type="entry name" value="Phosphogly_mut1"/>
</dbReference>
<dbReference type="NCBIfam" id="TIGR01258">
    <property type="entry name" value="pgm_1"/>
    <property type="match status" value="1"/>
</dbReference>
<dbReference type="NCBIfam" id="NF010713">
    <property type="entry name" value="PRK14115.1"/>
    <property type="match status" value="1"/>
</dbReference>
<dbReference type="PANTHER" id="PTHR11931">
    <property type="entry name" value="PHOSPHOGLYCERATE MUTASE"/>
    <property type="match status" value="1"/>
</dbReference>
<dbReference type="Pfam" id="PF00300">
    <property type="entry name" value="His_Phos_1"/>
    <property type="match status" value="1"/>
</dbReference>
<dbReference type="PIRSF" id="PIRSF000709">
    <property type="entry name" value="6PFK_2-Ptase"/>
    <property type="match status" value="1"/>
</dbReference>
<dbReference type="SMART" id="SM00855">
    <property type="entry name" value="PGAM"/>
    <property type="match status" value="1"/>
</dbReference>
<dbReference type="SUPFAM" id="SSF53254">
    <property type="entry name" value="Phosphoglycerate mutase-like"/>
    <property type="match status" value="1"/>
</dbReference>
<dbReference type="PROSITE" id="PS00175">
    <property type="entry name" value="PG_MUTASE"/>
    <property type="match status" value="1"/>
</dbReference>
<evidence type="ECO:0000255" key="1">
    <source>
        <dbReference type="HAMAP-Rule" id="MF_01039"/>
    </source>
</evidence>
<proteinExistence type="inferred from homology"/>
<feature type="chain" id="PRO_1000135947" description="2,3-bisphosphoglycerate-dependent phosphoglycerate mutase">
    <location>
        <begin position="1"/>
        <end position="250"/>
    </location>
</feature>
<feature type="active site" description="Tele-phosphohistidine intermediate" evidence="1">
    <location>
        <position position="11"/>
    </location>
</feature>
<feature type="active site" description="Proton donor/acceptor" evidence="1">
    <location>
        <position position="89"/>
    </location>
</feature>
<feature type="binding site" evidence="1">
    <location>
        <begin position="10"/>
        <end position="17"/>
    </location>
    <ligand>
        <name>substrate</name>
    </ligand>
</feature>
<feature type="binding site" evidence="1">
    <location>
        <begin position="23"/>
        <end position="24"/>
    </location>
    <ligand>
        <name>substrate</name>
    </ligand>
</feature>
<feature type="binding site" evidence="1">
    <location>
        <position position="62"/>
    </location>
    <ligand>
        <name>substrate</name>
    </ligand>
</feature>
<feature type="binding site" evidence="1">
    <location>
        <begin position="89"/>
        <end position="92"/>
    </location>
    <ligand>
        <name>substrate</name>
    </ligand>
</feature>
<feature type="binding site" evidence="1">
    <location>
        <position position="100"/>
    </location>
    <ligand>
        <name>substrate</name>
    </ligand>
</feature>
<feature type="binding site" evidence="1">
    <location>
        <begin position="116"/>
        <end position="117"/>
    </location>
    <ligand>
        <name>substrate</name>
    </ligand>
</feature>
<feature type="binding site" evidence="1">
    <location>
        <begin position="185"/>
        <end position="186"/>
    </location>
    <ligand>
        <name>substrate</name>
    </ligand>
</feature>
<feature type="site" description="Transition state stabilizer" evidence="1">
    <location>
        <position position="184"/>
    </location>
</feature>
<name>GPMA_ECODH</name>
<accession>B1X786</accession>
<sequence length="250" mass="28556">MAVTKLVLVRHGESQWNKENRFTGWYDVDLSEKGVSEAKAAGKLLKEEGYSFDFAYTSVLKRAIHTLWNVLDELDQAWLPVEKSWKLNERHYGALQGLNKAETAEKYGDEQVKQWRRGFAVTPPELTKDDERYPGHDPRYAKLSEKELPLTESLALTIDRVIPYWNETILPRMKSGERVIIAAHGNSLRALVKYLDNMSEEEILELNIPTGVPLVYEFDENFKPLKRYYLGNADEIAAKAAAVANQGKAK</sequence>
<reference key="1">
    <citation type="journal article" date="2008" name="J. Bacteriol.">
        <title>The complete genome sequence of Escherichia coli DH10B: insights into the biology of a laboratory workhorse.</title>
        <authorList>
            <person name="Durfee T."/>
            <person name="Nelson R."/>
            <person name="Baldwin S."/>
            <person name="Plunkett G. III"/>
            <person name="Burland V."/>
            <person name="Mau B."/>
            <person name="Petrosino J.F."/>
            <person name="Qin X."/>
            <person name="Muzny D.M."/>
            <person name="Ayele M."/>
            <person name="Gibbs R.A."/>
            <person name="Csorgo B."/>
            <person name="Posfai G."/>
            <person name="Weinstock G.M."/>
            <person name="Blattner F.R."/>
        </authorList>
    </citation>
    <scope>NUCLEOTIDE SEQUENCE [LARGE SCALE GENOMIC DNA]</scope>
    <source>
        <strain>K12 / DH10B</strain>
    </source>
</reference>
<organism>
    <name type="scientific">Escherichia coli (strain K12 / DH10B)</name>
    <dbReference type="NCBI Taxonomy" id="316385"/>
    <lineage>
        <taxon>Bacteria</taxon>
        <taxon>Pseudomonadati</taxon>
        <taxon>Pseudomonadota</taxon>
        <taxon>Gammaproteobacteria</taxon>
        <taxon>Enterobacterales</taxon>
        <taxon>Enterobacteriaceae</taxon>
        <taxon>Escherichia</taxon>
    </lineage>
</organism>
<comment type="function">
    <text evidence="1">Catalyzes the interconversion of 2-phosphoglycerate and 3-phosphoglycerate.</text>
</comment>
<comment type="catalytic activity">
    <reaction evidence="1">
        <text>(2R)-2-phosphoglycerate = (2R)-3-phosphoglycerate</text>
        <dbReference type="Rhea" id="RHEA:15901"/>
        <dbReference type="ChEBI" id="CHEBI:58272"/>
        <dbReference type="ChEBI" id="CHEBI:58289"/>
        <dbReference type="EC" id="5.4.2.11"/>
    </reaction>
</comment>
<comment type="pathway">
    <text evidence="1">Carbohydrate degradation; glycolysis; pyruvate from D-glyceraldehyde 3-phosphate: step 3/5.</text>
</comment>
<comment type="subunit">
    <text evidence="1">Homodimer.</text>
</comment>
<comment type="similarity">
    <text evidence="1">Belongs to the phosphoglycerate mutase family. BPG-dependent PGAM subfamily.</text>
</comment>
<keyword id="KW-0312">Gluconeogenesis</keyword>
<keyword id="KW-0324">Glycolysis</keyword>
<keyword id="KW-0413">Isomerase</keyword>
<gene>
    <name evidence="1" type="primary">gpmA</name>
    <name type="ordered locus">ECDH10B_0822</name>
</gene>
<protein>
    <recommendedName>
        <fullName evidence="1">2,3-bisphosphoglycerate-dependent phosphoglycerate mutase</fullName>
        <shortName evidence="1">BPG-dependent PGAM</shortName>
        <shortName evidence="1">PGAM</shortName>
        <shortName evidence="1">Phosphoglyceromutase</shortName>
        <shortName evidence="1">dPGM</shortName>
        <ecNumber evidence="1">5.4.2.11</ecNumber>
    </recommendedName>
</protein>